<accession>A1VYL9</accession>
<dbReference type="EC" id="3.6.1.9" evidence="1"/>
<dbReference type="EMBL" id="CP000538">
    <property type="protein sequence ID" value="EAQ73122.1"/>
    <property type="molecule type" value="Genomic_DNA"/>
</dbReference>
<dbReference type="SMR" id="A1VYL9"/>
<dbReference type="KEGG" id="cjj:CJJ81176_0535"/>
<dbReference type="eggNOG" id="COG0424">
    <property type="taxonomic scope" value="Bacteria"/>
</dbReference>
<dbReference type="HOGENOM" id="CLU_040416_2_2_7"/>
<dbReference type="Proteomes" id="UP000000646">
    <property type="component" value="Chromosome"/>
</dbReference>
<dbReference type="GO" id="GO:0005737">
    <property type="term" value="C:cytoplasm"/>
    <property type="evidence" value="ECO:0007669"/>
    <property type="project" value="UniProtKB-SubCell"/>
</dbReference>
<dbReference type="GO" id="GO:0047429">
    <property type="term" value="F:nucleoside triphosphate diphosphatase activity"/>
    <property type="evidence" value="ECO:0007669"/>
    <property type="project" value="UniProtKB-EC"/>
</dbReference>
<dbReference type="GO" id="GO:0009117">
    <property type="term" value="P:nucleotide metabolic process"/>
    <property type="evidence" value="ECO:0007669"/>
    <property type="project" value="UniProtKB-KW"/>
</dbReference>
<dbReference type="CDD" id="cd00555">
    <property type="entry name" value="Maf"/>
    <property type="match status" value="1"/>
</dbReference>
<dbReference type="Gene3D" id="3.90.950.10">
    <property type="match status" value="1"/>
</dbReference>
<dbReference type="HAMAP" id="MF_00528">
    <property type="entry name" value="Maf"/>
    <property type="match status" value="1"/>
</dbReference>
<dbReference type="InterPro" id="IPR029001">
    <property type="entry name" value="ITPase-like_fam"/>
</dbReference>
<dbReference type="InterPro" id="IPR003697">
    <property type="entry name" value="Maf-like"/>
</dbReference>
<dbReference type="NCBIfam" id="TIGR00172">
    <property type="entry name" value="maf"/>
    <property type="match status" value="1"/>
</dbReference>
<dbReference type="NCBIfam" id="NF003141">
    <property type="entry name" value="PRK04056.1"/>
    <property type="match status" value="1"/>
</dbReference>
<dbReference type="PANTHER" id="PTHR43213">
    <property type="entry name" value="BIFUNCTIONAL DTTP/UTP PYROPHOSPHATASE/METHYLTRANSFERASE PROTEIN-RELATED"/>
    <property type="match status" value="1"/>
</dbReference>
<dbReference type="PANTHER" id="PTHR43213:SF5">
    <property type="entry name" value="BIFUNCTIONAL DTTP_UTP PYROPHOSPHATASE_METHYLTRANSFERASE PROTEIN-RELATED"/>
    <property type="match status" value="1"/>
</dbReference>
<dbReference type="Pfam" id="PF02545">
    <property type="entry name" value="Maf"/>
    <property type="match status" value="1"/>
</dbReference>
<dbReference type="PIRSF" id="PIRSF006305">
    <property type="entry name" value="Maf"/>
    <property type="match status" value="1"/>
</dbReference>
<dbReference type="SUPFAM" id="SSF52972">
    <property type="entry name" value="ITPase-like"/>
    <property type="match status" value="1"/>
</dbReference>
<organism>
    <name type="scientific">Campylobacter jejuni subsp. jejuni serotype O:23/36 (strain 81-176)</name>
    <dbReference type="NCBI Taxonomy" id="354242"/>
    <lineage>
        <taxon>Bacteria</taxon>
        <taxon>Pseudomonadati</taxon>
        <taxon>Campylobacterota</taxon>
        <taxon>Epsilonproteobacteria</taxon>
        <taxon>Campylobacterales</taxon>
        <taxon>Campylobacteraceae</taxon>
        <taxon>Campylobacter</taxon>
    </lineage>
</organism>
<gene>
    <name type="ordered locus">CJJ81176_0535</name>
</gene>
<protein>
    <recommendedName>
        <fullName evidence="1">Nucleoside triphosphate pyrophosphatase</fullName>
        <ecNumber evidence="1">3.6.1.9</ecNumber>
    </recommendedName>
    <alternativeName>
        <fullName evidence="1">Nucleotide pyrophosphatase</fullName>
        <shortName evidence="1">Nucleotide PPase</shortName>
    </alternativeName>
</protein>
<sequence length="183" mass="20905">MLILASSSISRANLLKTAKIDFRQVSFDYDENLNKNISPFLYVQKIVLEKERQFLSTLGKDFQNQNLLFADSIVCIDEKILTKAKDKKEAYEMLALQNGKYASILSAFLLVKPEKRVFSLSKTTLYFKNFDENALRDYVENDLYKGKAGCIMCEGFHQNFITQQVGNLSTALGLDIQTLKAYL</sequence>
<reference key="1">
    <citation type="submission" date="2006-12" db="EMBL/GenBank/DDBJ databases">
        <authorList>
            <person name="Fouts D.E."/>
            <person name="Nelson K.E."/>
            <person name="Sebastian Y."/>
        </authorList>
    </citation>
    <scope>NUCLEOTIDE SEQUENCE [LARGE SCALE GENOMIC DNA]</scope>
    <source>
        <strain>81-176</strain>
    </source>
</reference>
<feature type="chain" id="PRO_1000060937" description="Nucleoside triphosphate pyrophosphatase">
    <location>
        <begin position="1"/>
        <end position="183"/>
    </location>
</feature>
<feature type="active site" description="Proton acceptor" evidence="1">
    <location>
        <position position="71"/>
    </location>
</feature>
<comment type="function">
    <text evidence="1">Nucleoside triphosphate pyrophosphatase. May have a dual role in cell division arrest and in preventing the incorporation of modified nucleotides into cellular nucleic acids.</text>
</comment>
<comment type="catalytic activity">
    <reaction evidence="1">
        <text>a ribonucleoside 5'-triphosphate + H2O = a ribonucleoside 5'-phosphate + diphosphate + H(+)</text>
        <dbReference type="Rhea" id="RHEA:23996"/>
        <dbReference type="ChEBI" id="CHEBI:15377"/>
        <dbReference type="ChEBI" id="CHEBI:15378"/>
        <dbReference type="ChEBI" id="CHEBI:33019"/>
        <dbReference type="ChEBI" id="CHEBI:58043"/>
        <dbReference type="ChEBI" id="CHEBI:61557"/>
        <dbReference type="EC" id="3.6.1.9"/>
    </reaction>
</comment>
<comment type="catalytic activity">
    <reaction evidence="1">
        <text>a 2'-deoxyribonucleoside 5'-triphosphate + H2O = a 2'-deoxyribonucleoside 5'-phosphate + diphosphate + H(+)</text>
        <dbReference type="Rhea" id="RHEA:44644"/>
        <dbReference type="ChEBI" id="CHEBI:15377"/>
        <dbReference type="ChEBI" id="CHEBI:15378"/>
        <dbReference type="ChEBI" id="CHEBI:33019"/>
        <dbReference type="ChEBI" id="CHEBI:61560"/>
        <dbReference type="ChEBI" id="CHEBI:65317"/>
        <dbReference type="EC" id="3.6.1.9"/>
    </reaction>
</comment>
<comment type="cofactor">
    <cofactor evidence="1">
        <name>a divalent metal cation</name>
        <dbReference type="ChEBI" id="CHEBI:60240"/>
    </cofactor>
</comment>
<comment type="subcellular location">
    <subcellularLocation>
        <location evidence="1">Cytoplasm</location>
    </subcellularLocation>
</comment>
<comment type="similarity">
    <text evidence="1">Belongs to the Maf family.</text>
</comment>
<evidence type="ECO:0000255" key="1">
    <source>
        <dbReference type="HAMAP-Rule" id="MF_00528"/>
    </source>
</evidence>
<name>NTPP_CAMJJ</name>
<keyword id="KW-0963">Cytoplasm</keyword>
<keyword id="KW-0378">Hydrolase</keyword>
<keyword id="KW-0546">Nucleotide metabolism</keyword>
<proteinExistence type="inferred from homology"/>